<gene>
    <name type="ORF">UL96</name>
</gene>
<sequence length="120" mass="13457">MTSKKELLKETMRHRLEQKHCKFLSDALGETHPSVEQQRIRAACVAFDLERLATLSTARALLDVSTRRASDAQKRTALTKGLLDGDTFYESNDALIEINDRVAELKDNVLDAARSVSEDP</sequence>
<evidence type="ECO:0000305" key="1"/>
<reference key="1">
    <citation type="submission" date="1995-05" db="EMBL/GenBank/DDBJ databases">
        <authorList>
            <person name="Fox D.S."/>
            <person name="Schleiss M.R."/>
        </authorList>
    </citation>
    <scope>NUCLEOTIDE SEQUENCE [GENOMIC DNA]</scope>
    <source>
        <strain>22122/UMN</strain>
    </source>
</reference>
<reference key="2">
    <citation type="journal article" date="2008" name="Virol. J.">
        <title>Analysis of the nucleotide sequence of the guinea pig cytomegalovirus (GPCMV) genome.</title>
        <authorList>
            <person name="Schleiss M.R."/>
            <person name="McGregor A."/>
            <person name="Choi K.Y."/>
            <person name="Date S.V."/>
            <person name="Cui X."/>
            <person name="McVoy M.A."/>
        </authorList>
    </citation>
    <scope>NUCLEOTIDE SEQUENCE [LARGE SCALE GENOMIC DNA]</scope>
    <scope>SEQUENCE REVISION</scope>
    <source>
        <strain>22122/UMN</strain>
    </source>
</reference>
<reference key="3">
    <citation type="journal article" date="2011" name="J. Gen. Virol.">
        <title>Re-evaluation of the genome sequence of guinea pig cytomegalovirus.</title>
        <authorList>
            <person name="Kanai K."/>
            <person name="Yamada S."/>
            <person name="Yamamoto Y."/>
            <person name="Fukui Y."/>
            <person name="Kurane I."/>
            <person name="Inoue N."/>
        </authorList>
    </citation>
    <scope>NUCLEOTIDE SEQUENCE [LARGE SCALE GENOMIC DNA]</scope>
    <source>
        <strain>22122/ATCC-P5</strain>
    </source>
</reference>
<reference key="4">
    <citation type="journal article" date="2013" name="Genome Announc.">
        <title>Complete genome sequence of pathogenic Guinea pig cytomegalovirus from salivary gland homogenates of infected animals.</title>
        <authorList>
            <person name="Yang D."/>
            <person name="Tamburro K."/>
            <person name="Dittmer D."/>
            <person name="Cui X."/>
            <person name="McVoy M.A."/>
            <person name="Hernandez-Alvarado N."/>
            <person name="Schleiss M.R."/>
        </authorList>
    </citation>
    <scope>NUCLEOTIDE SEQUENCE [LARGE SCALE GENOMIC DNA]</scope>
    <source>
        <strain>22122</strain>
    </source>
</reference>
<keyword id="KW-1185">Reference proteome</keyword>
<comment type="similarity">
    <text evidence="1">Belongs to the herpesviridae UL96 family.</text>
</comment>
<organismHost>
    <name type="scientific">Cavia porcellus</name>
    <name type="common">Guinea pig</name>
    <dbReference type="NCBI Taxonomy" id="10141"/>
</organismHost>
<accession>Q67669</accession>
<accession>E9RHA2</accession>
<proteinExistence type="inferred from homology"/>
<protein>
    <recommendedName>
        <fullName>Protein GP96</fullName>
    </recommendedName>
</protein>
<dbReference type="EMBL" id="KC503762">
    <property type="protein sequence ID" value="AGE11566.1"/>
    <property type="molecule type" value="Genomic_DNA"/>
</dbReference>
<dbReference type="EMBL" id="AB592928">
    <property type="protein sequence ID" value="BAJ78554.1"/>
    <property type="molecule type" value="Genomic_DNA"/>
</dbReference>
<dbReference type="SMR" id="Q67669"/>
<dbReference type="KEGG" id="vg:14536689"/>
<dbReference type="Proteomes" id="UP000102041">
    <property type="component" value="Segment"/>
</dbReference>
<dbReference type="Proteomes" id="UP000132784">
    <property type="component" value="Segment"/>
</dbReference>
<feature type="chain" id="PRO_0000116252" description="Protein GP96">
    <location>
        <begin position="1"/>
        <end position="120"/>
    </location>
</feature>
<organism>
    <name type="scientific">Guinea pig cytomegalovirus (strain 22122)</name>
    <name type="common">GPCMV</name>
    <dbReference type="NCBI Taxonomy" id="103920"/>
    <lineage>
        <taxon>Viruses</taxon>
        <taxon>Duplodnaviria</taxon>
        <taxon>Heunggongvirae</taxon>
        <taxon>Peploviricota</taxon>
        <taxon>Herviviricetes</taxon>
        <taxon>Herpesvirales</taxon>
        <taxon>Orthoherpesviridae</taxon>
        <taxon>Betaherpesvirinae</taxon>
        <taxon>Quwivirus</taxon>
        <taxon>Quwivirus caviidbeta2</taxon>
    </lineage>
</organism>
<name>UL96_GPCMV</name>